<protein>
    <recommendedName>
        <fullName evidence="19">Sterol regulatory element-binding protein cleavage-activating protein</fullName>
        <shortName evidence="19">SCAP</shortName>
        <shortName evidence="19">SREBP cleavage-activating protein</shortName>
    </recommendedName>
</protein>
<organism>
    <name type="scientific">Cricetulus griseus</name>
    <name type="common">Chinese hamster</name>
    <name type="synonym">Cricetulus barabensis griseus</name>
    <dbReference type="NCBI Taxonomy" id="10029"/>
    <lineage>
        <taxon>Eukaryota</taxon>
        <taxon>Metazoa</taxon>
        <taxon>Chordata</taxon>
        <taxon>Craniata</taxon>
        <taxon>Vertebrata</taxon>
        <taxon>Euteleostomi</taxon>
        <taxon>Mammalia</taxon>
        <taxon>Eutheria</taxon>
        <taxon>Euarchontoglires</taxon>
        <taxon>Glires</taxon>
        <taxon>Rodentia</taxon>
        <taxon>Myomorpha</taxon>
        <taxon>Muroidea</taxon>
        <taxon>Cricetidae</taxon>
        <taxon>Cricetinae</taxon>
        <taxon>Cricetulus</taxon>
    </lineage>
</organism>
<name>SCAP_CRIGR</name>
<gene>
    <name evidence="19" type="primary">SCAP</name>
</gene>
<dbReference type="EMBL" id="U67060">
    <property type="protein sequence ID" value="AAB19103.1"/>
    <property type="molecule type" value="mRNA"/>
</dbReference>
<dbReference type="EMBL" id="AF541996">
    <property type="protein sequence ID" value="AAQ11376.1"/>
    <property type="molecule type" value="mRNA"/>
</dbReference>
<dbReference type="PIR" id="T18526">
    <property type="entry name" value="T18526"/>
</dbReference>
<dbReference type="RefSeq" id="NP_001230965.1">
    <property type="nucleotide sequence ID" value="NM_001244036.1"/>
</dbReference>
<dbReference type="SMR" id="P97260"/>
<dbReference type="BioGRID" id="1613731">
    <property type="interactions" value="3"/>
</dbReference>
<dbReference type="CORUM" id="P97260"/>
<dbReference type="DIP" id="DIP-60914N"/>
<dbReference type="IntAct" id="P97260">
    <property type="interactions" value="2"/>
</dbReference>
<dbReference type="TCDB" id="2.A.6.6.4">
    <property type="family name" value="the resistance-nodulation-cell division (rnd) superfamily"/>
</dbReference>
<dbReference type="GlyCosmos" id="P97260">
    <property type="glycosylation" value="3 sites, No reported glycans"/>
</dbReference>
<dbReference type="iPTMnet" id="P97260"/>
<dbReference type="PaxDb" id="10029-NP_001230965.1"/>
<dbReference type="GeneID" id="100689048"/>
<dbReference type="KEGG" id="cge:100689048"/>
<dbReference type="CTD" id="22937"/>
<dbReference type="eggNOG" id="KOG1933">
    <property type="taxonomic scope" value="Eukaryota"/>
</dbReference>
<dbReference type="OrthoDB" id="361494at2759"/>
<dbReference type="Proteomes" id="UP000694386">
    <property type="component" value="Unplaced"/>
</dbReference>
<dbReference type="Proteomes" id="UP001108280">
    <property type="component" value="Chromosome 4"/>
</dbReference>
<dbReference type="GO" id="GO:0005783">
    <property type="term" value="C:endoplasmic reticulum"/>
    <property type="evidence" value="ECO:0000314"/>
    <property type="project" value="UniProtKB"/>
</dbReference>
<dbReference type="GO" id="GO:0005789">
    <property type="term" value="C:endoplasmic reticulum membrane"/>
    <property type="evidence" value="ECO:0000304"/>
    <property type="project" value="Reactome"/>
</dbReference>
<dbReference type="GO" id="GO:0012507">
    <property type="term" value="C:ER to Golgi transport vesicle membrane"/>
    <property type="evidence" value="ECO:0000314"/>
    <property type="project" value="UniProtKB"/>
</dbReference>
<dbReference type="GO" id="GO:0000139">
    <property type="term" value="C:Golgi membrane"/>
    <property type="evidence" value="ECO:0000250"/>
    <property type="project" value="UniProtKB"/>
</dbReference>
<dbReference type="GO" id="GO:0016020">
    <property type="term" value="C:membrane"/>
    <property type="evidence" value="ECO:0000314"/>
    <property type="project" value="UniProtKB"/>
</dbReference>
<dbReference type="GO" id="GO:0032936">
    <property type="term" value="C:SREBP-SCAP complex"/>
    <property type="evidence" value="ECO:0000314"/>
    <property type="project" value="UniProtKB"/>
</dbReference>
<dbReference type="GO" id="GO:0032937">
    <property type="term" value="C:SREBP-SCAP-Insig complex"/>
    <property type="evidence" value="ECO:0000314"/>
    <property type="project" value="UniProtKB"/>
</dbReference>
<dbReference type="GO" id="GO:0030120">
    <property type="term" value="C:vesicle coat"/>
    <property type="evidence" value="ECO:0000315"/>
    <property type="project" value="UniProtKB"/>
</dbReference>
<dbReference type="GO" id="GO:0032934">
    <property type="term" value="F:sterol binding"/>
    <property type="evidence" value="ECO:0000314"/>
    <property type="project" value="UniProtKB"/>
</dbReference>
<dbReference type="GO" id="GO:0036315">
    <property type="term" value="P:cellular response to sterol"/>
    <property type="evidence" value="ECO:0000315"/>
    <property type="project" value="UniProtKB"/>
</dbReference>
<dbReference type="GO" id="GO:0008203">
    <property type="term" value="P:cholesterol metabolic process"/>
    <property type="evidence" value="ECO:0000314"/>
    <property type="project" value="UniProtKB"/>
</dbReference>
<dbReference type="GO" id="GO:0090110">
    <property type="term" value="P:COPII-coated vesicle cargo loading"/>
    <property type="evidence" value="ECO:0000314"/>
    <property type="project" value="UniProtKB"/>
</dbReference>
<dbReference type="GO" id="GO:0006606">
    <property type="term" value="P:protein import into nucleus"/>
    <property type="evidence" value="ECO:0000315"/>
    <property type="project" value="UniProtKB"/>
</dbReference>
<dbReference type="GO" id="GO:0045540">
    <property type="term" value="P:regulation of cholesterol biosynthetic process"/>
    <property type="evidence" value="ECO:0007669"/>
    <property type="project" value="TreeGrafter"/>
</dbReference>
<dbReference type="GO" id="GO:0032933">
    <property type="term" value="P:SREBP signaling pathway"/>
    <property type="evidence" value="ECO:0000314"/>
    <property type="project" value="UniProtKB"/>
</dbReference>
<dbReference type="FunFam" id="2.130.10.10:FF:000209">
    <property type="entry name" value="sterol regulatory element-binding protein cleavage-activating protein-like"/>
    <property type="match status" value="1"/>
</dbReference>
<dbReference type="FunFam" id="2.130.10.10:FF:000391">
    <property type="entry name" value="sterol regulatory element-binding protein cleavage-activating protein-like"/>
    <property type="match status" value="1"/>
</dbReference>
<dbReference type="Gene3D" id="2.130.10.10">
    <property type="entry name" value="YVTN repeat-like/Quinoprotein amine dehydrogenase"/>
    <property type="match status" value="2"/>
</dbReference>
<dbReference type="InterPro" id="IPR057042">
    <property type="entry name" value="Beta-prop_SCAP"/>
</dbReference>
<dbReference type="InterPro" id="IPR053958">
    <property type="entry name" value="HMGCR/SNAP/NPC1-like_SSD"/>
</dbReference>
<dbReference type="InterPro" id="IPR030225">
    <property type="entry name" value="SCAP"/>
</dbReference>
<dbReference type="InterPro" id="IPR057041">
    <property type="entry name" value="SCAP_N"/>
</dbReference>
<dbReference type="InterPro" id="IPR000731">
    <property type="entry name" value="SSD"/>
</dbReference>
<dbReference type="InterPro" id="IPR015943">
    <property type="entry name" value="WD40/YVTN_repeat-like_dom_sf"/>
</dbReference>
<dbReference type="InterPro" id="IPR019775">
    <property type="entry name" value="WD40_repeat_CS"/>
</dbReference>
<dbReference type="InterPro" id="IPR036322">
    <property type="entry name" value="WD40_repeat_dom_sf"/>
</dbReference>
<dbReference type="InterPro" id="IPR001680">
    <property type="entry name" value="WD40_rpt"/>
</dbReference>
<dbReference type="PANTHER" id="PTHR46378">
    <property type="entry name" value="STEROL REGULATORY ELEMENT-BINDING PROTEIN CLEAVAGE-ACTIVATING PROTEIN"/>
    <property type="match status" value="1"/>
</dbReference>
<dbReference type="PANTHER" id="PTHR46378:SF1">
    <property type="entry name" value="STEROL REGULATORY ELEMENT-BINDING PROTEIN CLEAVAGE-ACTIVATING PROTEIN"/>
    <property type="match status" value="1"/>
</dbReference>
<dbReference type="Pfam" id="PF24017">
    <property type="entry name" value="Beta-prop_SCAP"/>
    <property type="match status" value="1"/>
</dbReference>
<dbReference type="Pfam" id="PF24006">
    <property type="entry name" value="SCAP_N"/>
    <property type="match status" value="1"/>
</dbReference>
<dbReference type="Pfam" id="PF12349">
    <property type="entry name" value="Sterol-sensing"/>
    <property type="match status" value="1"/>
</dbReference>
<dbReference type="SMART" id="SM00320">
    <property type="entry name" value="WD40"/>
    <property type="match status" value="6"/>
</dbReference>
<dbReference type="SUPFAM" id="SSF82866">
    <property type="entry name" value="Multidrug efflux transporter AcrB transmembrane domain"/>
    <property type="match status" value="1"/>
</dbReference>
<dbReference type="SUPFAM" id="SSF50978">
    <property type="entry name" value="WD40 repeat-like"/>
    <property type="match status" value="1"/>
</dbReference>
<dbReference type="PROSITE" id="PS50156">
    <property type="entry name" value="SSD"/>
    <property type="match status" value="1"/>
</dbReference>
<dbReference type="PROSITE" id="PS00678">
    <property type="entry name" value="WD_REPEATS_1"/>
    <property type="match status" value="1"/>
</dbReference>
<dbReference type="PROSITE" id="PS50082">
    <property type="entry name" value="WD_REPEATS_2"/>
    <property type="match status" value="1"/>
</dbReference>
<dbReference type="PROSITE" id="PS50294">
    <property type="entry name" value="WD_REPEATS_REGION"/>
    <property type="match status" value="1"/>
</dbReference>
<comment type="function">
    <text evidence="6 10 11 12 13 14 15 16">Escort protein required for cholesterol as well as lipid homeostasis (PubMed:10497220, PubMed:12482938, PubMed:15728349, PubMed:15899885, PubMed:17428919, PubMed:8898195). Regulates export of the SCAP-SREBP complex from the endoplasmic reticulum to the Golgi upon low cholesterol, thereby regulating the processing of sterol regulatory element-binding proteins (SREBPs) SREBF1/SREBP1 and SREBF2/SREBP2 (PubMed:10497220, PubMed:12482938, PubMed:15728349, PubMed:15899885, PubMed:17428919, PubMed:27068746, PubMed:8898195). At high sterol concentrations, formation of a ternary complex with INSIG (INSIG1 or INSIG2) leads to mask the ER export signal in SCAP, promoting retention of the complex in the endoplasmic reticulum (PubMed:12482938, PubMed:15728349, PubMed:15899885, PubMed:27068746). Low sterol concentrations trigger release of INSIG, a conformational change in the SSD domain of SCAP, unmasking of the ER export signal, promoting recruitment into COPII-coated vesicles and transport of the SCAP-SREBP to the Golgi: in the Golgi, SREBPs are then processed, releasing the transcription factor fragment of SREBPs from the membrane, its import into the nucleus and up-regulation of LDLR, INSIG1 and the mevalonate pathway (PubMed:15728349, PubMed:15899885, PubMed:17428919, PubMed:27068746). Binds cholesterol via its SSD domain (PubMed:15260976, PubMed:27068746).</text>
</comment>
<comment type="subunit">
    <text evidence="1 9 10 11 12 17">Membrane region forms a homotetramer (PubMed:15260976). Component of the SCAP-SREBP complex (composed of SCAP and SREBF1/SREBP1 or SREBF2/SREBP2); interacts with SREBF1/SREBP1 or SREBF2/SREBP2 through its C-terminal cytoplasmic domain (PubMed:9488713). Forms a ternary complex with INSIG1 or INSIG2 through its transmembrane domains at high sterol concentrations (PubMed:12482938, PubMed:15728349). Interacts with PAQR3; the interaction anchors the SCAP-SREBP complex to the Golgi apparatus in low cholesterol conditions (By similarity). Interacts with the SEC23-SEC24 complex in a SAR1-GTP-dependent manner through an ER export signal in its third cytoplasmic loop (PubMed:12193656). Interacts with RNF139; the interaction inhibits the interaction of SCAP with SEC24B and hampering the ER to Golgi transport of the SCAP-SREBP complex (By similarity). Interacts with SPRING (By similarity).</text>
</comment>
<comment type="subcellular location">
    <subcellularLocation>
        <location evidence="8">Endoplasmic reticulum membrane</location>
        <topology evidence="3">Multi-pass membrane protein</topology>
    </subcellularLocation>
    <subcellularLocation>
        <location evidence="8">Golgi apparatus membrane</location>
        <topology evidence="3">Multi-pass membrane protein</topology>
    </subcellularLocation>
    <subcellularLocation>
        <location evidence="13">Cytoplasmic vesicle</location>
        <location evidence="13">COPII-coated vesicle membrane</location>
        <topology evidence="3">Multi-pass membrane protein</topology>
    </subcellularLocation>
    <text evidence="1 8">Moves from the endoplasmic reticulum to the Golgi in the absence of sterols (PubMed:10896675). Requires the presence of SPRING for proper localization to endoplasmic reticulum (By similarity).</text>
</comment>
<comment type="domain">
    <text evidence="15">Loop-1 binds to loop-7, enabling interaction with COPII-coated vesicles (PubMed:27068746). When levels of cholesterol in the endoplasmic reticulum increase, Loop-1 binds to cholesterol instead, thereby disrupting direct binding between the two loops and preventing the SCAP-SREBP complex from exiting the endoplasmic reticulum (PubMed:27068746).</text>
</comment>
<comment type="domain">
    <text evidence="14">Cholesterol bound to SSD domain of SCAP or oxysterol bound to INSIG (INSIG1 or INSIG2) leads to masking of an ER export signal (also named MELADL motif) on SCAP possibly by moving the signal further away from the ER membrane.</text>
</comment>
<comment type="PTM">
    <text evidence="2">Ubiquitinated at Lys-454 and Lys-466. RNF145 triggers ubiquitination of SCAP, likely inhibiting SCAP-SREBP complex transport to the Golgi apparatus and the subsequent processing/maturation of SREBF2/SREBP2.</text>
</comment>
<comment type="disruption phenotype">
    <text evidence="6">CHO cells show loss of site-1 cleavage of SREBF1/SREBP1 and SREBF2/SREBP2, reduced synthesis of cholesterol, a reduced level of LDLR and cholesterol auxotrophy.</text>
</comment>
<comment type="similarity">
    <text evidence="20">Belongs to the WD repeat SCAP family.</text>
</comment>
<proteinExistence type="evidence at protein level"/>
<sequence>MTLTERLREKISQAFYNHGLLCASYPIPIILFTGLCILACCYPLLKLPLPGTGPVEFSTPVKDYSPPPVDSDHKQGEPSEQPEWYVGAPVAYIQQIFVKSSVSPWHKNLLAVDVFRLPLSRAFQLVEEIRNHVLRDSSGTKSLEEVCLQVTDLLPGLRKLRNLLPEHGCLLLSPGNFWQNDWERFHADPDIIGTIHQHEPKTLQTSATLKDLLFGVPGKYSGVSLYTRKRTVSYTITLVFQRYHAKFLSSLRARLMLLHPSPNCSLRAENLVHVHFKEEIGIAELIPLVTTYIILFAYIYFSTRKIDMVKSKWGLALAAVVTVLSSLLMSVGLCTLFGLTPTLNGGEIFPYLVVVIGLENVLVLTKSVVSTPVDLEVKLRIAQGLSSESWSIMKNVATELGIILIGYFTLVPAIQEFCLFAVVGLVSDFFLQMFFFTTVLSIDIRRMELADLNKRLPPESCLPSAKPVGRPARYERQLAVRPAMPHTITLQPSSFRNLRLPKRLRVIYFLARTRLAQRLIMAGTVVWIGILVYTDPAGLRTYLAAQVTEQSPLGEGSLGPMPVPSGVLPASRPDPAFSIFPPDAPKLPENQTVPGELPEHAAPAEGVHDSRAPEVTWGPEDEELWRRLSFRHWPTLFNYYNITLAKRYISLLPVIPVTLRLNPQEALEGRQPQDGRSAWAPPESLPAGLWEAGPKGPGGTQAHGDITLYKVAALGLAAGIVLVLLLLCLYRVLCPRNYGQPGGGAGRRRRGELPCDDYGYAPPETEIVPLVLRGHLMDIECLASDGMLLVSCCLAGQVCVWDAQTGDCLTRIPRPGSRRDSCGGGAFETQENWERLSDGGKTSPEEPGESPPLRHRPRGPPQPALFGDQPDLTCLIDTNFSVQLPPEPTQPEPRHRAGCGRARDSGYDFSRLVQRVYQEEGLAAVRMPALRPPSPGSPLPQASQEDGAAPEKGSPPLAWAPSTAGSIWSLELQGNLIVVGRSSGRLEVWDAIEGVLCCSNDEVSSGITALVFLDRRIVAARLNGSLDFFSLETHTSLSPLQFRGTPGRGSSPSSSVYSSSNTVACHLTHTVPCAHQKPITALRAAAGRLVTGSQDHTLRVFRLEDSCCLFTLQGHSGAITTVYIDQTMVLASGGQDGAICLWDVLTGSRVSHTFAHRGDVTSLTCTTSCVISSGLDDLINIWDRSTGIKLYSIQQDLGCGASLGVISDNLLVTGGQGCVSFWDLNYGDLLQTVYLGKNSEAQPARQILVLDNAAIVCNFGSELSLVYVPSVLEKLD</sequence>
<reference key="1">
    <citation type="journal article" date="1996" name="Cell">
        <title>Sterol resistance in CHO cells traced to point mutation in SREBP cleavage-activating protein.</title>
        <authorList>
            <person name="Hua X."/>
            <person name="Nohturfft A."/>
            <person name="Goldstein J.L."/>
            <person name="Brown M.S."/>
        </authorList>
    </citation>
    <scope>NUCLEOTIDE SEQUENCE [MRNA]</scope>
    <scope>FUNCTION</scope>
    <scope>MUTAGENESIS OF ASP-443</scope>
    <source>
        <tissue>Ovary</tissue>
    </source>
</reference>
<reference key="2">
    <citation type="journal article" date="2002" name="Proc. Natl. Acad. Sci. U.S.A.">
        <title>Three mutations in sterol-sensing domain of SCAP block interaction with insig and render SREBP cleavage insensitive to sterols.</title>
        <authorList>
            <person name="Yabe D."/>
            <person name="Xia Z.-P."/>
            <person name="Adams C.M."/>
            <person name="Rawson R.B."/>
        </authorList>
    </citation>
    <scope>NUCLEOTIDE SEQUENCE [MRNA] OF 56-522</scope>
    <scope>FUNCTION</scope>
    <scope>INTERACTION WITH INSIG1 AND INSIG2</scope>
    <scope>MUTAGENESIS OF TYR-298; LEU-315 AND ASP-443</scope>
    <source>
        <tissue>Ovary</tissue>
    </source>
</reference>
<reference key="3">
    <citation type="journal article" date="1998" name="J. Biol. Chem.">
        <title>Cleavage of sterol regulatory element-binding proteins (SREBPs) at site-1 requires interaction with SREBP cleavage-activating protein. Evidence from in vivo competition studies.</title>
        <authorList>
            <person name="Sakai J."/>
            <person name="Nohturfft A."/>
            <person name="Goldstein J.L."/>
            <person name="Brown M.S."/>
        </authorList>
    </citation>
    <scope>INTERACTION WITH SREBF2</scope>
</reference>
<reference key="4">
    <citation type="journal article" date="1998" name="J. Biol. Chem.">
        <title>Topology of SREBP cleavage-activating protein, a polytopic membrane protein with a sterol-sensing domain.</title>
        <authorList>
            <person name="Nohturfft A."/>
            <person name="Brown M.S."/>
            <person name="Goldstein J.L."/>
        </authorList>
    </citation>
    <scope>TOPOLOGY</scope>
    <scope>GLYCOSYLATION AT ASN-263; ASN-590 AND ASN-641</scope>
</reference>
<reference key="5">
    <citation type="journal article" date="1999" name="J. Biol. Chem.">
        <title>Failure to cleave sterol regulatory element-binding proteins (SREBPs) causes cholesterol auxotrophy in Chinese hamster ovary cells with genetic absence of SREBP cleavage-activating protein.</title>
        <authorList>
            <person name="Rawson R.B."/>
            <person name="DeBose-Boyd R."/>
            <person name="Goldstein J.L."/>
            <person name="Brown M.S."/>
        </authorList>
    </citation>
    <scope>FUNCTION</scope>
    <scope>DISRUPTION PHENOTYPE</scope>
</reference>
<reference key="6">
    <citation type="journal article" date="1999" name="Proc. Natl. Acad. Sci. U.S.A.">
        <title>Sterols regulate cycling of SREBP cleavage-activating protein (SCAP) between endoplasmic reticulum and Golgi.</title>
        <authorList>
            <person name="Nohturfft A."/>
            <person name="DeBose-Boyd R.A."/>
            <person name="Scheek S."/>
            <person name="Goldstein J.L."/>
            <person name="Brown M.S."/>
        </authorList>
    </citation>
    <scope>SUBCELLULAR LOCATION</scope>
    <scope>CLEAVAGE BY MBTPS1</scope>
    <scope>MUTAGENESIS OF TYR-298</scope>
    <source>
        <tissue>Ovary</tissue>
    </source>
</reference>
<reference key="7">
    <citation type="journal article" date="2000" name="J. Biol. Chem.">
        <title>Overexpression of membrane domain of SCAP prevents sterols from inhibiting SCAP.SREBP exit from endoplasmic reticulum.</title>
        <authorList>
            <person name="Yang T."/>
            <person name="Goldstein J.L."/>
            <person name="Brown M.S."/>
        </authorList>
    </citation>
    <scope>SUBCELLULAR LOCATION</scope>
</reference>
<reference key="8">
    <citation type="journal article" date="2002" name="Proc. Natl. Acad. Sci. U.S.A.">
        <title>Sterols block binding of COPII proteins to SCAP, thereby controlling SCAP sorting in ER.</title>
        <authorList>
            <person name="Espenshade P.J."/>
            <person name="Li W.-P."/>
            <person name="Yabe D."/>
        </authorList>
    </citation>
    <scope>INTERACTION WITH THE SEC23/SEC24 COMPLEX</scope>
</reference>
<reference key="9">
    <citation type="journal article" date="2004" name="Mol. Cell">
        <title>Direct binding of cholesterol to the purified membrane region of SCAP: mechanism for a sterol-sensing domain.</title>
        <authorList>
            <person name="Radhakrishnan A."/>
            <person name="Sun L.-P."/>
            <person name="Kwon H.J."/>
            <person name="Brown M.S."/>
            <person name="Goldstein J.L."/>
        </authorList>
    </citation>
    <scope>FUNCTION</scope>
    <scope>INTERACTION WITH CHOLESTEROL</scope>
    <scope>MUTAGENESIS OF TYR-298</scope>
</reference>
<reference key="10">
    <citation type="journal article" date="2005" name="J. Biol. Chem.">
        <title>Insig required for sterol-mediated inhibition of Scap/SREBP binding to COPII proteins in vitro.</title>
        <authorList>
            <person name="Sun L.-P."/>
            <person name="Li L."/>
            <person name="Goldstein J.L."/>
            <person name="Brown M.S."/>
        </authorList>
    </citation>
    <scope>FUNCTION</scope>
    <scope>ER EXPORT SIGNAL</scope>
    <scope>SUBCELLULAR LOCATION</scope>
    <scope>MUTAGENESIS OF TYR-298; LEU-449; 445-ARG-ARG-446; 447-MET-GLU-448 AND 451-ASP-LEU-452</scope>
</reference>
<reference key="11">
    <citation type="journal article" date="2005" name="Proc. Natl. Acad. Sci. U.S.A.">
        <title>Intramembrane aspartic acid in SCAP protein governs cholesterol-induced conformational change.</title>
        <authorList>
            <person name="Feramisco J.D."/>
            <person name="Radhakrishnan A."/>
            <person name="Ikeda Y."/>
            <person name="Reitz J."/>
            <person name="Brown M.S."/>
            <person name="Goldstein J.L."/>
        </authorList>
    </citation>
    <scope>FUNCTION</scope>
    <scope>INTERACTION WITH INSIG1 AND INSIG2</scope>
    <scope>MUTAGENESIS OF ASP-428</scope>
</reference>
<reference key="12">
    <citation type="journal article" date="2007" name="Proc. Natl. Acad. Sci. U.S.A.">
        <title>Sterol-regulated transport of SREBPs from endoplasmic reticulum to Golgi: Insig renders sorting signal in Scap inaccessible to COPII proteins.</title>
        <authorList>
            <person name="Sun L.-P."/>
            <person name="Seemann J."/>
            <person name="Goldstein J.L."/>
            <person name="Brown M.S."/>
        </authorList>
    </citation>
    <scope>FUNCTION</scope>
    <scope>MUTAGENESIS OF VAL-439; ARG-446; ASN-453; 437-THR-THR-438; 439-VAL-LEU-440; 444-ILE-ARG-445 AND 363-PRO--PRO-492</scope>
    <scope>DOMAIN</scope>
</reference>
<reference key="13">
    <citation type="journal article" date="2016" name="J. Biol. Chem.">
        <title>Direct Demonstration That Loop1 of Scap Binds to Loop7: A crucial event in cholesterol homeostasis.</title>
        <authorList>
            <person name="Zhang Y."/>
            <person name="Lee K.M."/>
            <person name="Kinch L.N."/>
            <person name="Clark L."/>
            <person name="Grishin N.V."/>
            <person name="Rosenbaum D.M."/>
            <person name="Brown M.S."/>
            <person name="Goldstein J.L."/>
            <person name="Radhakrishnan A."/>
        </authorList>
    </citation>
    <scope>FUNCTION</scope>
    <scope>DOMAIN</scope>
    <scope>MUTAGENESIS OF TYR-234 AND TYR-640</scope>
</reference>
<feature type="chain" id="PRO_0000051207" description="Sterol regulatory element-binding protein cleavage-activating protein">
    <location>
        <begin position="1"/>
        <end position="1276"/>
    </location>
</feature>
<feature type="topological domain" description="Cytoplasmic" evidence="21">
    <location>
        <begin position="1"/>
        <end position="18"/>
    </location>
</feature>
<feature type="transmembrane region" description="Helical; Name=1" evidence="3">
    <location>
        <begin position="19"/>
        <end position="39"/>
    </location>
</feature>
<feature type="topological domain" description="Lumenal" evidence="21">
    <location>
        <begin position="40"/>
        <end position="279"/>
    </location>
</feature>
<feature type="transmembrane region" description="Helical; Name=2" evidence="3">
    <location>
        <begin position="280"/>
        <end position="300"/>
    </location>
</feature>
<feature type="topological domain" description="Cytoplasmic" evidence="21">
    <location>
        <begin position="301"/>
        <end position="312"/>
    </location>
</feature>
<feature type="transmembrane region" description="Helical; Name=3" evidence="3">
    <location>
        <begin position="313"/>
        <end position="333"/>
    </location>
</feature>
<feature type="topological domain" description="Lumenal" evidence="21">
    <location>
        <begin position="334"/>
        <end position="344"/>
    </location>
</feature>
<feature type="transmembrane region" description="Helical; Name=4" evidence="3">
    <location>
        <begin position="345"/>
        <end position="365"/>
    </location>
</feature>
<feature type="topological domain" description="Cytoplasmic" evidence="21">
    <location>
        <begin position="366"/>
        <end position="401"/>
    </location>
</feature>
<feature type="transmembrane region" description="Helical; Name=5" evidence="3">
    <location>
        <begin position="402"/>
        <end position="422"/>
    </location>
</feature>
<feature type="topological domain" description="Lumenal" evidence="21">
    <location>
        <position position="423"/>
    </location>
</feature>
<feature type="transmembrane region" description="Helical; Name=6" evidence="3">
    <location>
        <begin position="424"/>
        <end position="444"/>
    </location>
</feature>
<feature type="topological domain" description="Cytoplasmic" evidence="21">
    <location>
        <begin position="445"/>
        <end position="518"/>
    </location>
</feature>
<feature type="transmembrane region" description="Helical; Name=7" evidence="3">
    <location>
        <begin position="519"/>
        <end position="539"/>
    </location>
</feature>
<feature type="topological domain" description="Lumenal" evidence="21">
    <location>
        <begin position="540"/>
        <end position="708"/>
    </location>
</feature>
<feature type="transmembrane region" description="Helical; Name=8" evidence="3">
    <location>
        <begin position="709"/>
        <end position="729"/>
    </location>
</feature>
<feature type="topological domain" description="Cytoplasmic" evidence="21">
    <location>
        <begin position="730"/>
        <end position="1276"/>
    </location>
</feature>
<feature type="domain" description="SSD" evidence="4">
    <location>
        <begin position="284"/>
        <end position="442"/>
    </location>
</feature>
<feature type="repeat" description="WD 1">
    <location>
        <begin position="771"/>
        <end position="811"/>
    </location>
</feature>
<feature type="repeat" description="WD 2">
    <location>
        <begin position="949"/>
        <end position="999"/>
    </location>
</feature>
<feature type="repeat" description="WD 3">
    <location>
        <begin position="1002"/>
        <end position="1039"/>
    </location>
</feature>
<feature type="repeat" description="WD 4">
    <location>
        <begin position="1074"/>
        <end position="1111"/>
    </location>
</feature>
<feature type="repeat" description="WD 5">
    <location>
        <begin position="1114"/>
        <end position="1152"/>
    </location>
</feature>
<feature type="repeat" description="WD 6">
    <location>
        <begin position="1155"/>
        <end position="1192"/>
    </location>
</feature>
<feature type="repeat" description="WD 7">
    <location>
        <begin position="1194"/>
        <end position="1232"/>
    </location>
</feature>
<feature type="region of interest" description="Loop-1" evidence="15">
    <location>
        <begin position="46"/>
        <end position="284"/>
    </location>
</feature>
<feature type="region of interest" description="Disordered" evidence="5">
    <location>
        <begin position="60"/>
        <end position="81"/>
    </location>
</feature>
<feature type="region of interest" description="Loop-7" evidence="15">
    <location>
        <begin position="535"/>
        <end position="710"/>
    </location>
</feature>
<feature type="region of interest" description="Interaction with SREBF2" evidence="17">
    <location>
        <begin position="731"/>
        <end position="1276"/>
    </location>
</feature>
<feature type="region of interest" description="Disordered" evidence="5">
    <location>
        <begin position="816"/>
        <end position="903"/>
    </location>
</feature>
<feature type="region of interest" description="Disordered" evidence="5">
    <location>
        <begin position="928"/>
        <end position="957"/>
    </location>
</feature>
<feature type="short sequence motif" description="ER export signal" evidence="13">
    <location>
        <begin position="447"/>
        <end position="452"/>
    </location>
</feature>
<feature type="modified residue" description="Phosphoserine" evidence="1">
    <location>
        <position position="821"/>
    </location>
</feature>
<feature type="modified residue" description="Phosphoserine" evidence="1">
    <location>
        <position position="837"/>
    </location>
</feature>
<feature type="modified residue" description="Phosphoserine" evidence="2">
    <location>
        <position position="843"/>
    </location>
</feature>
<feature type="modified residue" description="Phosphoserine" evidence="1">
    <location>
        <position position="850"/>
    </location>
</feature>
<feature type="modified residue" description="Phosphoserine" evidence="1">
    <location>
        <position position="905"/>
    </location>
</feature>
<feature type="modified residue" description="Phosphoserine" evidence="1">
    <location>
        <position position="934"/>
    </location>
</feature>
<feature type="modified residue" description="Omega-N-methylarginine" evidence="2">
    <location>
        <position position="1048"/>
    </location>
</feature>
<feature type="glycosylation site" description="N-linked (GlcNAc...) asparagine" evidence="18">
    <location>
        <position position="263"/>
    </location>
</feature>
<feature type="glycosylation site" description="N-linked (GlcNAc...) asparagine" evidence="18">
    <location>
        <position position="590"/>
    </location>
</feature>
<feature type="glycosylation site" description="N-linked (GlcNAc...) asparagine" evidence="18">
    <location>
        <position position="641"/>
    </location>
</feature>
<feature type="cross-link" description="Glycyl lysine isopeptide (Lys-Gly) (interchain with G-Cter in ubiquitin)" evidence="2">
    <location>
        <position position="454"/>
    </location>
</feature>
<feature type="cross-link" description="Glycyl lysine isopeptide (Lys-Gly) (interchain with G-Cter in ubiquitin)" evidence="2">
    <location>
        <position position="466"/>
    </location>
</feature>
<feature type="mutagenesis site" description="Abolished interaction between loop-1 and loop-7." evidence="15">
    <original>Y</original>
    <variation>A</variation>
    <location>
        <position position="234"/>
    </location>
</feature>
<feature type="mutagenesis site" description="Loss of sterol-dependent ER retention due to loss of interaction with INSIG. Constitutive interaction with COPII coat and maturation of SREBF." evidence="7 10 11 13">
    <original>Y</original>
    <variation>C</variation>
    <location>
        <position position="298"/>
    </location>
</feature>
<feature type="mutagenesis site" description="Loss of sterol-dependent ER retention due to loss of interaction with INSIG. Constitutive maturation of SREBF." evidence="10">
    <original>L</original>
    <variation>F</variation>
    <location>
        <position position="315"/>
    </location>
</feature>
<feature type="mutagenesis site" description="Loss of release from ER retention and maturation of SREBF. Constitutive interaction with INSIG." evidence="12">
    <original>D</original>
    <variation>A</variation>
    <variation>N</variation>
    <variation>K</variation>
    <location>
        <position position="428"/>
    </location>
</feature>
<feature type="mutagenesis site" description="Very mild reduction of SREBF maturation. Slightly higher affinity for INSIG in the absence of sterols." evidence="12">
    <original>D</original>
    <variation>E</variation>
    <location>
        <position position="428"/>
    </location>
</feature>
<feature type="mutagenesis site" description="No effect." evidence="14">
    <original>TT</original>
    <variation>AA</variation>
    <location>
        <begin position="437"/>
        <end position="438"/>
    </location>
</feature>
<feature type="mutagenesis site" description="Loss of SREBF maturation and interaction with COPII coat." evidence="14">
    <location>
        <begin position="437"/>
        <end position="438"/>
    </location>
</feature>
<feature type="mutagenesis site" description="Loss of SREBF maturation." evidence="14">
    <location>
        <begin position="439"/>
        <end position="440"/>
    </location>
</feature>
<feature type="mutagenesis site" description="Loss of SREBF maturation." evidence="14">
    <original>V</original>
    <variation>VLL</variation>
    <location>
        <position position="439"/>
    </location>
</feature>
<feature type="mutagenesis site" description="Loss of sterol-dependent ER retention due to loss of interaction with INSIG." evidence="10 16">
    <original>D</original>
    <variation>N</variation>
    <location>
        <position position="443"/>
    </location>
</feature>
<feature type="mutagenesis site" description="Loss of SREBF maturation." evidence="14">
    <location>
        <begin position="444"/>
        <end position="445"/>
    </location>
</feature>
<feature type="mutagenesis site" description="No effect." evidence="13">
    <original>RR</original>
    <variation>AA</variation>
    <location>
        <begin position="445"/>
        <end position="446"/>
    </location>
</feature>
<feature type="mutagenesis site" description="Loss of SREBF maturation." evidence="14">
    <original>R</original>
    <variation>RA</variation>
    <variation>RAAAAA</variation>
    <variation>RG</variation>
    <variation>RGG</variation>
    <variation>RGS</variation>
    <location>
        <position position="446"/>
    </location>
</feature>
<feature type="mutagenesis site" description="Loss of SREBF maturation and interaction with COPII coat." evidence="14">
    <original>R</original>
    <variation>RAA</variation>
    <location>
        <position position="446"/>
    </location>
</feature>
<feature type="mutagenesis site" description="Loss of SREBF maturation and interaction with COPII coat." evidence="13">
    <original>ME</original>
    <variation>AA</variation>
    <location>
        <begin position="447"/>
        <end position="448"/>
    </location>
</feature>
<feature type="mutagenesis site" description="Loss of SREBF maturation and interaction with COPII coat." evidence="13">
    <original>L</original>
    <variation>A</variation>
    <location>
        <position position="449"/>
    </location>
</feature>
<feature type="mutagenesis site" description="Loss of SREBF maturation, interaction with COPII coat and recruitment into COPII-coated vesicles." evidence="13">
    <original>DL</original>
    <variation>AA</variation>
    <location>
        <begin position="451"/>
        <end position="452"/>
    </location>
</feature>
<feature type="mutagenesis site" description="No effect." evidence="14">
    <original>N</original>
    <variation>NAAAAA</variation>
    <location>
        <position position="453"/>
    </location>
</feature>
<feature type="mutagenesis site" description="No effect.">
    <location>
        <begin position="463"/>
        <end position="492"/>
    </location>
</feature>
<feature type="mutagenesis site" description="Abolished interaction between loop-1 and loop-7." evidence="15">
    <original>Y</original>
    <variation>S</variation>
    <location>
        <position position="640"/>
    </location>
</feature>
<accession>P97260</accession>
<accession>Q2WEK9</accession>
<keyword id="KW-0153">Cholesterol metabolism</keyword>
<keyword id="KW-0968">Cytoplasmic vesicle</keyword>
<keyword id="KW-0256">Endoplasmic reticulum</keyword>
<keyword id="KW-0325">Glycoprotein</keyword>
<keyword id="KW-0333">Golgi apparatus</keyword>
<keyword id="KW-1017">Isopeptide bond</keyword>
<keyword id="KW-0443">Lipid metabolism</keyword>
<keyword id="KW-0446">Lipid-binding</keyword>
<keyword id="KW-0472">Membrane</keyword>
<keyword id="KW-0488">Methylation</keyword>
<keyword id="KW-0597">Phosphoprotein</keyword>
<keyword id="KW-0677">Repeat</keyword>
<keyword id="KW-0753">Steroid metabolism</keyword>
<keyword id="KW-1207">Sterol metabolism</keyword>
<keyword id="KW-0812">Transmembrane</keyword>
<keyword id="KW-1133">Transmembrane helix</keyword>
<keyword id="KW-0832">Ubl conjugation</keyword>
<keyword id="KW-0853">WD repeat</keyword>
<evidence type="ECO:0000250" key="1">
    <source>
        <dbReference type="UniProtKB" id="Q12770"/>
    </source>
</evidence>
<evidence type="ECO:0000250" key="2">
    <source>
        <dbReference type="UniProtKB" id="Q6GQT6"/>
    </source>
</evidence>
<evidence type="ECO:0000255" key="3"/>
<evidence type="ECO:0000255" key="4">
    <source>
        <dbReference type="PROSITE-ProRule" id="PRU00199"/>
    </source>
</evidence>
<evidence type="ECO:0000256" key="5">
    <source>
        <dbReference type="SAM" id="MobiDB-lite"/>
    </source>
</evidence>
<evidence type="ECO:0000269" key="6">
    <source>
    </source>
</evidence>
<evidence type="ECO:0000269" key="7">
    <source>
    </source>
</evidence>
<evidence type="ECO:0000269" key="8">
    <source>
    </source>
</evidence>
<evidence type="ECO:0000269" key="9">
    <source>
    </source>
</evidence>
<evidence type="ECO:0000269" key="10">
    <source>
    </source>
</evidence>
<evidence type="ECO:0000269" key="11">
    <source>
    </source>
</evidence>
<evidence type="ECO:0000269" key="12">
    <source>
    </source>
</evidence>
<evidence type="ECO:0000269" key="13">
    <source>
    </source>
</evidence>
<evidence type="ECO:0000269" key="14">
    <source>
    </source>
</evidence>
<evidence type="ECO:0000269" key="15">
    <source>
    </source>
</evidence>
<evidence type="ECO:0000269" key="16">
    <source>
    </source>
</evidence>
<evidence type="ECO:0000269" key="17">
    <source>
    </source>
</evidence>
<evidence type="ECO:0000269" key="18">
    <source>
    </source>
</evidence>
<evidence type="ECO:0000303" key="19">
    <source>
    </source>
</evidence>
<evidence type="ECO:0000305" key="20"/>
<evidence type="ECO:0000305" key="21">
    <source>
    </source>
</evidence>